<proteinExistence type="evidence at protein level"/>
<protein>
    <recommendedName>
        <fullName>Solute carrier family 22 member 18</fullName>
    </recommendedName>
    <alternativeName>
        <fullName>Imprinted multi-membrane-spanning polyspecific transporter-related protein 1</fullName>
        <shortName>Multi-membrane-spanning polyspecific transporter</shortName>
    </alternativeName>
    <alternativeName>
        <fullName>Organic cation transporter-like protein 2</fullName>
        <shortName>ORCTL-2</shortName>
    </alternativeName>
</protein>
<comment type="function">
    <text evidence="2 4">May act as a transporter of organic cations based on a proton efflux antiport mechanism. May play a role in the transport of chloroquine and quinidine-related compounds in kidney (By similarity). Plays a role in the regulation of lipid metabolism (PubMed:38626531).</text>
</comment>
<comment type="subunit">
    <text evidence="1">Interacts with RNF167.</text>
</comment>
<comment type="subcellular location">
    <subcellularLocation>
        <location evidence="2">Apical cell membrane</location>
        <topology evidence="2">Multi-pass membrane protein</topology>
    </subcellularLocation>
    <text evidence="2">Localized at the apical membrane surface of renal proximal tubules.</text>
</comment>
<comment type="tissue specificity">
    <text evidence="5 6 7">Expressed at high levels in fetal and adult kidney and liver, and extraembryonic membranes (yolk sac). Expressed at moderate levels in intestine, heart, lung and testis.</text>
</comment>
<comment type="disruption phenotype">
    <text evidence="4">Deficient mice show decreased hepatic triglyceride content under refeeding conditions following fasting.</text>
</comment>
<comment type="similarity">
    <text evidence="10">Belongs to the major facilitator (TC 2.A.1) superfamily. Organic cation transporter (TC 2.A.1.19) family.</text>
</comment>
<comment type="caution">
    <text evidence="2">Was initially classified as a member of the SLC22 family. However, an evolutionary and phylogenetic analysis suggested that SLC22A18 is unique and that it is most distantly related to SLC22 family members.</text>
</comment>
<comment type="sequence caution" evidence="10">
    <conflict type="erroneous initiation">
        <sequence resource="EMBL-CDS" id="AAC04788"/>
    </conflict>
</comment>
<comment type="sequence caution" evidence="10">
    <conflict type="erroneous initiation">
        <sequence resource="EMBL-CDS" id="AAH03734"/>
    </conflict>
</comment>
<reference key="1">
    <citation type="journal article" date="1998" name="DNA Res.">
        <title>A novel gene, ITM, located between p57KIP2 and IPL, is imprinted in mice.</title>
        <authorList>
            <person name="Morisaki H."/>
            <person name="Hatada I."/>
            <person name="Morisaki T."/>
            <person name="Mukai T."/>
        </authorList>
    </citation>
    <scope>NUCLEOTIDE SEQUENCE [MRNA]</scope>
    <scope>TISSUE SPECIFICITY</scope>
</reference>
<reference key="2">
    <citation type="journal article" date="1998" name="Genomics">
        <title>Divergently transcribed overlapping genes expressed in liver and kidney and located in the 11p15.5 imprinted domain.</title>
        <authorList>
            <person name="Cooper P.R."/>
            <person name="Smilinich N.J."/>
            <person name="Day C.D."/>
            <person name="Nowak N.J."/>
            <person name="Reid L.H."/>
            <person name="Pearsall R.S."/>
            <person name="Reece M."/>
            <person name="Prawitt D."/>
            <person name="Landers J."/>
            <person name="Housman D.E."/>
            <person name="Winterpacht A."/>
            <person name="Zabel B.U."/>
            <person name="Pelletier J."/>
            <person name="Weissman B.E."/>
            <person name="Shows T.B."/>
            <person name="Higgins M.J."/>
        </authorList>
    </citation>
    <scope>NUCLEOTIDE SEQUENCE [MRNA]</scope>
    <scope>TISSUE SPECIFICITY</scope>
</reference>
<reference key="3">
    <citation type="journal article" date="1998" name="Hum. Mol. Genet.">
        <title>IMPT1, an imprinted gene similar to polyspecific transporter and multi-drug resistance genes.</title>
        <authorList>
            <person name="Dao D."/>
            <person name="Frank D."/>
            <person name="Qian N."/>
            <person name="O'Keefe D."/>
            <person name="Vosatka R.J."/>
            <person name="Walsh C.P."/>
            <person name="Tycko B."/>
        </authorList>
    </citation>
    <scope>NUCLEOTIDE SEQUENCE [MRNA]</scope>
    <scope>TISSUE SPECIFICITY</scope>
</reference>
<reference key="4">
    <citation type="journal article" date="2000" name="Hum. Mol. Genet.">
        <title>Sequence and functional comparison in the Beckwith-Wiedemann region: implications for a novel imprinting centre and extended imprinting.</title>
        <authorList>
            <person name="Engemann S."/>
            <person name="Stroedicke M."/>
            <person name="Paulsen M."/>
            <person name="Franck O."/>
            <person name="Reinhardt R."/>
            <person name="Lane N."/>
            <person name="Reik W."/>
            <person name="Walter J."/>
        </authorList>
    </citation>
    <scope>NUCLEOTIDE SEQUENCE [GENOMIC DNA]</scope>
    <source>
        <strain>129/Sv</strain>
    </source>
</reference>
<reference key="5">
    <citation type="journal article" date="2004" name="Genome Res.">
        <title>The status, quality, and expansion of the NIH full-length cDNA project: the Mammalian Gene Collection (MGC).</title>
        <authorList>
            <consortium name="The MGC Project Team"/>
        </authorList>
    </citation>
    <scope>NUCLEOTIDE SEQUENCE [LARGE SCALE MRNA]</scope>
    <source>
        <strain>FVB/N</strain>
        <tissue>Mammary tumor</tissue>
    </source>
</reference>
<reference key="6">
    <citation type="journal article" date="2010" name="Cell">
        <title>A tissue-specific atlas of mouse protein phosphorylation and expression.</title>
        <authorList>
            <person name="Huttlin E.L."/>
            <person name="Jedrychowski M.P."/>
            <person name="Elias J.E."/>
            <person name="Goswami T."/>
            <person name="Rad R."/>
            <person name="Beausoleil S.A."/>
            <person name="Villen J."/>
            <person name="Haas W."/>
            <person name="Sowa M.E."/>
            <person name="Gygi S.P."/>
        </authorList>
    </citation>
    <scope>IDENTIFICATION BY MASS SPECTROMETRY [LARGE SCALE ANALYSIS]</scope>
    <source>
        <tissue>Kidney</tissue>
        <tissue>Liver</tissue>
    </source>
</reference>
<reference key="7">
    <citation type="journal article" date="2024" name="Biochem. Biophys. Res. Commun.">
        <title>Overexpression of Slc22a18 facilitates fat accumulation in mice.</title>
        <authorList>
            <person name="Yamamoto T."/>
            <person name="Iizuka Y."/>
            <person name="Izumi-Yamamoto K."/>
            <person name="Shirota M."/>
            <person name="Mori N."/>
            <person name="Tahara Y."/>
            <person name="Fujita T."/>
            <person name="Gotoda T."/>
        </authorList>
    </citation>
    <scope>DISRUPTION PHENOTYPE</scope>
    <scope>FUNCTION</scope>
</reference>
<dbReference type="EMBL" id="AB012084">
    <property type="protein sequence ID" value="BAA32780.1"/>
    <property type="molecule type" value="mRNA"/>
</dbReference>
<dbReference type="EMBL" id="AF037065">
    <property type="protein sequence ID" value="AAC04788.1"/>
    <property type="status" value="ALT_INIT"/>
    <property type="molecule type" value="mRNA"/>
</dbReference>
<dbReference type="EMBL" id="AF028739">
    <property type="protein sequence ID" value="AAB82728.1"/>
    <property type="molecule type" value="mRNA"/>
</dbReference>
<dbReference type="EMBL" id="AJ276505">
    <property type="protein sequence ID" value="CAC16401.2"/>
    <property type="molecule type" value="Genomic_DNA"/>
</dbReference>
<dbReference type="EMBL" id="BC003734">
    <property type="protein sequence ID" value="AAH03734.2"/>
    <property type="status" value="ALT_INIT"/>
    <property type="molecule type" value="mRNA"/>
</dbReference>
<dbReference type="RefSeq" id="NP_001036225.1">
    <property type="nucleotide sequence ID" value="NM_001042760.1"/>
</dbReference>
<dbReference type="RefSeq" id="NP_032793.2">
    <property type="nucleotide sequence ID" value="NM_008767.2"/>
</dbReference>
<dbReference type="SMR" id="Q78KK3"/>
<dbReference type="FunCoup" id="Q78KK3">
    <property type="interactions" value="32"/>
</dbReference>
<dbReference type="STRING" id="10090.ENSMUSP00000101537"/>
<dbReference type="GlyGen" id="Q78KK3">
    <property type="glycosylation" value="1 site, 1 O-linked glycan (1 site)"/>
</dbReference>
<dbReference type="iPTMnet" id="Q78KK3"/>
<dbReference type="PhosphoSitePlus" id="Q78KK3"/>
<dbReference type="SwissPalm" id="Q78KK3"/>
<dbReference type="jPOST" id="Q78KK3"/>
<dbReference type="PaxDb" id="10090-ENSMUSP00000101537"/>
<dbReference type="ProteomicsDB" id="260761"/>
<dbReference type="DNASU" id="18400"/>
<dbReference type="GeneID" id="18400"/>
<dbReference type="KEGG" id="mmu:18400"/>
<dbReference type="UCSC" id="uc009kpg.1">
    <property type="organism name" value="mouse"/>
</dbReference>
<dbReference type="AGR" id="MGI:1336884"/>
<dbReference type="CTD" id="18400"/>
<dbReference type="MGI" id="MGI:1336884">
    <property type="gene designation" value="Slc22a18"/>
</dbReference>
<dbReference type="eggNOG" id="ENOG502QT94">
    <property type="taxonomic scope" value="Eukaryota"/>
</dbReference>
<dbReference type="InParanoid" id="Q78KK3"/>
<dbReference type="OrthoDB" id="440553at2759"/>
<dbReference type="PhylomeDB" id="Q78KK3"/>
<dbReference type="TreeFam" id="TF352510"/>
<dbReference type="Reactome" id="R-MMU-549127">
    <property type="pathway name" value="Organic cation transport"/>
</dbReference>
<dbReference type="BioGRID-ORCS" id="18400">
    <property type="hits" value="4 hits in 78 CRISPR screens"/>
</dbReference>
<dbReference type="ChiTaRS" id="Slc22a18">
    <property type="organism name" value="mouse"/>
</dbReference>
<dbReference type="PRO" id="PR:Q78KK3"/>
<dbReference type="Proteomes" id="UP000000589">
    <property type="component" value="Unplaced"/>
</dbReference>
<dbReference type="RNAct" id="Q78KK3">
    <property type="molecule type" value="protein"/>
</dbReference>
<dbReference type="GO" id="GO:0016324">
    <property type="term" value="C:apical plasma membrane"/>
    <property type="evidence" value="ECO:0007669"/>
    <property type="project" value="UniProtKB-SubCell"/>
</dbReference>
<dbReference type="GO" id="GO:0005886">
    <property type="term" value="C:plasma membrane"/>
    <property type="evidence" value="ECO:0000250"/>
    <property type="project" value="MGI"/>
</dbReference>
<dbReference type="GO" id="GO:0008514">
    <property type="term" value="F:organic anion transmembrane transporter activity"/>
    <property type="evidence" value="ECO:0000304"/>
    <property type="project" value="MGI"/>
</dbReference>
<dbReference type="GO" id="GO:0015293">
    <property type="term" value="F:symporter activity"/>
    <property type="evidence" value="ECO:0007669"/>
    <property type="project" value="UniProtKB-KW"/>
</dbReference>
<dbReference type="GO" id="GO:0006820">
    <property type="term" value="P:monoatomic anion transport"/>
    <property type="evidence" value="ECO:0000304"/>
    <property type="project" value="MGI"/>
</dbReference>
<dbReference type="CDD" id="cd17331">
    <property type="entry name" value="MFS_SLC22A18"/>
    <property type="match status" value="1"/>
</dbReference>
<dbReference type="FunFam" id="1.20.1250.20:FF:000297">
    <property type="entry name" value="Solute carrier family 22 member 18"/>
    <property type="match status" value="1"/>
</dbReference>
<dbReference type="Gene3D" id="1.20.1250.20">
    <property type="entry name" value="MFS general substrate transporter like domains"/>
    <property type="match status" value="1"/>
</dbReference>
<dbReference type="InterPro" id="IPR011701">
    <property type="entry name" value="MFS"/>
</dbReference>
<dbReference type="InterPro" id="IPR020846">
    <property type="entry name" value="MFS_dom"/>
</dbReference>
<dbReference type="InterPro" id="IPR036259">
    <property type="entry name" value="MFS_trans_sf"/>
</dbReference>
<dbReference type="InterPro" id="IPR001958">
    <property type="entry name" value="Tet-R_TetA/multi-R_MdtG-like"/>
</dbReference>
<dbReference type="PANTHER" id="PTHR24002">
    <property type="entry name" value="SOLUTE CARRIER FAMILY 22 MEMBER 18"/>
    <property type="match status" value="1"/>
</dbReference>
<dbReference type="PANTHER" id="PTHR24002:SF3">
    <property type="entry name" value="SOLUTE CARRIER FAMILY 22 MEMBER 18"/>
    <property type="match status" value="1"/>
</dbReference>
<dbReference type="Pfam" id="PF07690">
    <property type="entry name" value="MFS_1"/>
    <property type="match status" value="1"/>
</dbReference>
<dbReference type="PRINTS" id="PR01035">
    <property type="entry name" value="TCRTETA"/>
</dbReference>
<dbReference type="SUPFAM" id="SSF103473">
    <property type="entry name" value="MFS general substrate transporter"/>
    <property type="match status" value="1"/>
</dbReference>
<dbReference type="PROSITE" id="PS50850">
    <property type="entry name" value="MFS"/>
    <property type="match status" value="1"/>
</dbReference>
<keyword id="KW-1003">Cell membrane</keyword>
<keyword id="KW-0406">Ion transport</keyword>
<keyword id="KW-0472">Membrane</keyword>
<keyword id="KW-1185">Reference proteome</keyword>
<keyword id="KW-0769">Symport</keyword>
<keyword id="KW-0812">Transmembrane</keyword>
<keyword id="KW-1133">Transmembrane helix</keyword>
<keyword id="KW-0813">Transport</keyword>
<evidence type="ECO:0000250" key="1"/>
<evidence type="ECO:0000250" key="2">
    <source>
        <dbReference type="UniProtKB" id="Q96BI1"/>
    </source>
</evidence>
<evidence type="ECO:0000255" key="3"/>
<evidence type="ECO:0000269" key="4">
    <source>
    </source>
</evidence>
<evidence type="ECO:0000269" key="5">
    <source>
    </source>
</evidence>
<evidence type="ECO:0000269" key="6">
    <source>
    </source>
</evidence>
<evidence type="ECO:0000269" key="7">
    <source>
    </source>
</evidence>
<evidence type="ECO:0000303" key="8">
    <source>
    </source>
</evidence>
<evidence type="ECO:0000303" key="9">
    <source>
    </source>
</evidence>
<evidence type="ECO:0000305" key="10"/>
<gene>
    <name type="primary">Slc67a1</name>
    <name evidence="8" type="synonym">Impt1</name>
    <name evidence="9" type="synonym">Itm</name>
    <name type="synonym">Orctl2</name>
    <name type="synonym">Slc22a18</name>
    <name type="synonym">Tssc5</name>
</gene>
<sequence>MAALPRQGIIILTYVLAALELTCLFMQFSILPYLSRTLGLDSVSFGYLQTTFGVLQLLGGPVFGRFADQCGARAALSLSFLAASALYLLLVASCSPALPGVFLLFASRIPSALMHTLPAAQMVITDLTAPTERPAALGRLGLCFGIGIIFGSLLGGTLNTAYGIQCPAILAFVVTLLGAVLSFTCVPATTKEASVQSAPQGGTKASVFDLKAITRLLLLPRVLPVFLVKVISGLPSGLFLVMFSIISMDFFQLEAAQAGYLMSFFGILQMMIQGLVIGRLSTHFPEEALLRSSVLVFAVVGLGMALMSSVLHFCFLMPGLVFSLCTLNVVTDSMLTKAVSASDTGTMLGLSASVQPLTRTLGPTLGGLLYRSYGVPIFGHVQLMVNLLVLLVLWKKPLSQKGEKAR</sequence>
<name>S67A1_MOUSE</name>
<organism>
    <name type="scientific">Mus musculus</name>
    <name type="common">Mouse</name>
    <dbReference type="NCBI Taxonomy" id="10090"/>
    <lineage>
        <taxon>Eukaryota</taxon>
        <taxon>Metazoa</taxon>
        <taxon>Chordata</taxon>
        <taxon>Craniata</taxon>
        <taxon>Vertebrata</taxon>
        <taxon>Euteleostomi</taxon>
        <taxon>Mammalia</taxon>
        <taxon>Eutheria</taxon>
        <taxon>Euarchontoglires</taxon>
        <taxon>Glires</taxon>
        <taxon>Rodentia</taxon>
        <taxon>Myomorpha</taxon>
        <taxon>Muroidea</taxon>
        <taxon>Muridae</taxon>
        <taxon>Murinae</taxon>
        <taxon>Mus</taxon>
        <taxon>Mus</taxon>
    </lineage>
</organism>
<accession>Q78KK3</accession>
<accession>O35428</accession>
<accession>O54959</accession>
<accession>O88283</accession>
<accession>Q99NF4</accession>
<feature type="chain" id="PRO_0000220510" description="Solute carrier family 22 member 18">
    <location>
        <begin position="1"/>
        <end position="406"/>
    </location>
</feature>
<feature type="transmembrane region" description="Helical" evidence="3">
    <location>
        <begin position="8"/>
        <end position="28"/>
    </location>
</feature>
<feature type="transmembrane region" description="Helical" evidence="3">
    <location>
        <begin position="43"/>
        <end position="63"/>
    </location>
</feature>
<feature type="transmembrane region" description="Helical" evidence="3">
    <location>
        <begin position="85"/>
        <end position="105"/>
    </location>
</feature>
<feature type="transmembrane region" description="Helical" evidence="3">
    <location>
        <begin position="140"/>
        <end position="160"/>
    </location>
</feature>
<feature type="transmembrane region" description="Helical" evidence="3">
    <location>
        <begin position="168"/>
        <end position="188"/>
    </location>
</feature>
<feature type="transmembrane region" description="Helical" evidence="3">
    <location>
        <begin position="226"/>
        <end position="246"/>
    </location>
</feature>
<feature type="transmembrane region" description="Helical" evidence="3">
    <location>
        <begin position="258"/>
        <end position="278"/>
    </location>
</feature>
<feature type="transmembrane region" description="Helical" evidence="3">
    <location>
        <begin position="295"/>
        <end position="315"/>
    </location>
</feature>
<feature type="transmembrane region" description="Helical" evidence="3">
    <location>
        <begin position="316"/>
        <end position="336"/>
    </location>
</feature>
<feature type="transmembrane region" description="Helical" evidence="3">
    <location>
        <begin position="374"/>
        <end position="394"/>
    </location>
</feature>
<feature type="sequence conflict" description="In Ref. 4; CAC16401." evidence="10" ref="4">
    <original>Y</original>
    <variation>V</variation>
    <location>
        <position position="33"/>
    </location>
</feature>
<feature type="sequence conflict" description="In Ref. 4; CAC16401." evidence="10" ref="4">
    <original>F</original>
    <variation>Y</variation>
    <location>
        <position position="66"/>
    </location>
</feature>
<feature type="sequence conflict" description="In Ref. 2; AAC04788." evidence="10" ref="2">
    <original>D</original>
    <variation>N</variation>
    <location>
        <position position="68"/>
    </location>
</feature>
<feature type="sequence conflict" description="In Ref. 3; AAB82728." evidence="10" ref="3">
    <original>A</original>
    <variation>G</variation>
    <location>
        <position position="83"/>
    </location>
</feature>
<feature type="sequence conflict" description="In Ref. 2; AAC04788." evidence="10" ref="2">
    <original>L</original>
    <variation>I</variation>
    <location>
        <position position="117"/>
    </location>
</feature>
<feature type="sequence conflict" description="In Ref. 4; CAC16401." evidence="10" ref="4">
    <original>AA</original>
    <variation>GT</variation>
    <location>
        <begin position="119"/>
        <end position="120"/>
    </location>
</feature>
<feature type="sequence conflict" description="In Ref. 2; AAC04788." evidence="10" ref="2">
    <original>I</original>
    <variation>M</variation>
    <location>
        <position position="149"/>
    </location>
</feature>
<feature type="sequence conflict" description="In Ref. 4; CAC16401." evidence="10" ref="4">
    <original>I</original>
    <variation>Y</variation>
    <location>
        <position position="164"/>
    </location>
</feature>
<feature type="sequence conflict" description="In Ref. 3; AAB82728." evidence="10" ref="3">
    <original>G</original>
    <variation>R</variation>
    <location>
        <position position="178"/>
    </location>
</feature>
<feature type="sequence conflict" description="In Ref. 3; AAB82728." evidence="10" ref="3">
    <original>A</original>
    <variation>G</variation>
    <location>
        <position position="205"/>
    </location>
</feature>
<feature type="sequence conflict" description="In Ref. 2; AAC04788." evidence="10" ref="2">
    <original>VKVI</original>
    <variation>SVF</variation>
    <location>
        <begin position="228"/>
        <end position="231"/>
    </location>
</feature>
<feature type="sequence conflict" description="In Ref. 4; CAC16401." evidence="10" ref="4">
    <original>L</original>
    <variation>V</variation>
    <location>
        <position position="238"/>
    </location>
</feature>
<feature type="sequence conflict" description="In Ref. 4; CAC16401." evidence="10" ref="4">
    <original>M</original>
    <variation>V</variation>
    <location>
        <position position="271"/>
    </location>
</feature>
<feature type="sequence conflict" description="In Ref. 4; CAC16401." evidence="10" ref="4">
    <original>A</original>
    <variation>V</variation>
    <location>
        <position position="305"/>
    </location>
</feature>
<feature type="sequence conflict" description="In Ref. 4; CAC16401." evidence="10" ref="4">
    <original>T</original>
    <variation>A</variation>
    <location>
        <position position="346"/>
    </location>
</feature>